<reference key="1">
    <citation type="journal article" date="2004" name="Proc. Natl. Acad. Sci. U.S.A.">
        <title>Genomic plasticity of the causative agent of melioidosis, Burkholderia pseudomallei.</title>
        <authorList>
            <person name="Holden M.T.G."/>
            <person name="Titball R.W."/>
            <person name="Peacock S.J."/>
            <person name="Cerdeno-Tarraga A.-M."/>
            <person name="Atkins T."/>
            <person name="Crossman L.C."/>
            <person name="Pitt T."/>
            <person name="Churcher C."/>
            <person name="Mungall K.L."/>
            <person name="Bentley S.D."/>
            <person name="Sebaihia M."/>
            <person name="Thomson N.R."/>
            <person name="Bason N."/>
            <person name="Beacham I.R."/>
            <person name="Brooks K."/>
            <person name="Brown K.A."/>
            <person name="Brown N.F."/>
            <person name="Challis G.L."/>
            <person name="Cherevach I."/>
            <person name="Chillingworth T."/>
            <person name="Cronin A."/>
            <person name="Crossett B."/>
            <person name="Davis P."/>
            <person name="DeShazer D."/>
            <person name="Feltwell T."/>
            <person name="Fraser A."/>
            <person name="Hance Z."/>
            <person name="Hauser H."/>
            <person name="Holroyd S."/>
            <person name="Jagels K."/>
            <person name="Keith K.E."/>
            <person name="Maddison M."/>
            <person name="Moule S."/>
            <person name="Price C."/>
            <person name="Quail M.A."/>
            <person name="Rabbinowitsch E."/>
            <person name="Rutherford K."/>
            <person name="Sanders M."/>
            <person name="Simmonds M."/>
            <person name="Songsivilai S."/>
            <person name="Stevens K."/>
            <person name="Tumapa S."/>
            <person name="Vesaratchavest M."/>
            <person name="Whitehead S."/>
            <person name="Yeats C."/>
            <person name="Barrell B.G."/>
            <person name="Oyston P.C.F."/>
            <person name="Parkhill J."/>
        </authorList>
    </citation>
    <scope>NUCLEOTIDE SEQUENCE [LARGE SCALE GENOMIC DNA]</scope>
    <source>
        <strain>K96243</strain>
    </source>
</reference>
<keyword id="KW-0046">Antibiotic resistance</keyword>
<keyword id="KW-0997">Cell inner membrane</keyword>
<keyword id="KW-1003">Cell membrane</keyword>
<keyword id="KW-0133">Cell shape</keyword>
<keyword id="KW-0961">Cell wall biogenesis/degradation</keyword>
<keyword id="KW-0378">Hydrolase</keyword>
<keyword id="KW-0472">Membrane</keyword>
<keyword id="KW-0573">Peptidoglycan synthesis</keyword>
<keyword id="KW-1185">Reference proteome</keyword>
<keyword id="KW-0812">Transmembrane</keyword>
<keyword id="KW-1133">Transmembrane helix</keyword>
<dbReference type="EC" id="3.6.1.27" evidence="1"/>
<dbReference type="EMBL" id="BX571965">
    <property type="protein sequence ID" value="CAH36651.1"/>
    <property type="molecule type" value="Genomic_DNA"/>
</dbReference>
<dbReference type="RefSeq" id="WP_004185904.1">
    <property type="nucleotide sequence ID" value="NZ_CP009538.1"/>
</dbReference>
<dbReference type="RefSeq" id="YP_109239.1">
    <property type="nucleotide sequence ID" value="NC_006350.1"/>
</dbReference>
<dbReference type="SMR" id="Q63RM9"/>
<dbReference type="STRING" id="272560.BPSL2643"/>
<dbReference type="KEGG" id="bps:BPSL2643"/>
<dbReference type="PATRIC" id="fig|272560.51.peg.2704"/>
<dbReference type="eggNOG" id="COG1968">
    <property type="taxonomic scope" value="Bacteria"/>
</dbReference>
<dbReference type="Proteomes" id="UP000000605">
    <property type="component" value="Chromosome 1"/>
</dbReference>
<dbReference type="GO" id="GO:0005886">
    <property type="term" value="C:plasma membrane"/>
    <property type="evidence" value="ECO:0007669"/>
    <property type="project" value="UniProtKB-SubCell"/>
</dbReference>
<dbReference type="GO" id="GO:0050380">
    <property type="term" value="F:undecaprenyl-diphosphatase activity"/>
    <property type="evidence" value="ECO:0007669"/>
    <property type="project" value="UniProtKB-UniRule"/>
</dbReference>
<dbReference type="GO" id="GO:0071555">
    <property type="term" value="P:cell wall organization"/>
    <property type="evidence" value="ECO:0007669"/>
    <property type="project" value="UniProtKB-KW"/>
</dbReference>
<dbReference type="GO" id="GO:0009252">
    <property type="term" value="P:peptidoglycan biosynthetic process"/>
    <property type="evidence" value="ECO:0007669"/>
    <property type="project" value="UniProtKB-KW"/>
</dbReference>
<dbReference type="GO" id="GO:0008360">
    <property type="term" value="P:regulation of cell shape"/>
    <property type="evidence" value="ECO:0007669"/>
    <property type="project" value="UniProtKB-KW"/>
</dbReference>
<dbReference type="GO" id="GO:0046677">
    <property type="term" value="P:response to antibiotic"/>
    <property type="evidence" value="ECO:0007669"/>
    <property type="project" value="UniProtKB-UniRule"/>
</dbReference>
<dbReference type="HAMAP" id="MF_01006">
    <property type="entry name" value="Undec_diphosphatase"/>
    <property type="match status" value="1"/>
</dbReference>
<dbReference type="InterPro" id="IPR003824">
    <property type="entry name" value="UppP"/>
</dbReference>
<dbReference type="NCBIfam" id="NF001389">
    <property type="entry name" value="PRK00281.1-2"/>
    <property type="match status" value="1"/>
</dbReference>
<dbReference type="NCBIfam" id="NF001390">
    <property type="entry name" value="PRK00281.1-4"/>
    <property type="match status" value="1"/>
</dbReference>
<dbReference type="NCBIfam" id="TIGR00753">
    <property type="entry name" value="undec_PP_bacA"/>
    <property type="match status" value="1"/>
</dbReference>
<dbReference type="PANTHER" id="PTHR30622">
    <property type="entry name" value="UNDECAPRENYL-DIPHOSPHATASE"/>
    <property type="match status" value="1"/>
</dbReference>
<dbReference type="PANTHER" id="PTHR30622:SF3">
    <property type="entry name" value="UNDECAPRENYL-DIPHOSPHATASE"/>
    <property type="match status" value="1"/>
</dbReference>
<dbReference type="Pfam" id="PF02673">
    <property type="entry name" value="BacA"/>
    <property type="match status" value="1"/>
</dbReference>
<organism>
    <name type="scientific">Burkholderia pseudomallei (strain K96243)</name>
    <dbReference type="NCBI Taxonomy" id="272560"/>
    <lineage>
        <taxon>Bacteria</taxon>
        <taxon>Pseudomonadati</taxon>
        <taxon>Pseudomonadota</taxon>
        <taxon>Betaproteobacteria</taxon>
        <taxon>Burkholderiales</taxon>
        <taxon>Burkholderiaceae</taxon>
        <taxon>Burkholderia</taxon>
        <taxon>pseudomallei group</taxon>
    </lineage>
</organism>
<evidence type="ECO:0000255" key="1">
    <source>
        <dbReference type="HAMAP-Rule" id="MF_01006"/>
    </source>
</evidence>
<feature type="chain" id="PRO_0000151127" description="Undecaprenyl-diphosphatase 2">
    <location>
        <begin position="1"/>
        <end position="276"/>
    </location>
</feature>
<feature type="transmembrane region" description="Helical" evidence="1">
    <location>
        <begin position="85"/>
        <end position="105"/>
    </location>
</feature>
<feature type="transmembrane region" description="Helical" evidence="1">
    <location>
        <begin position="108"/>
        <end position="128"/>
    </location>
</feature>
<feature type="transmembrane region" description="Helical" evidence="1">
    <location>
        <begin position="187"/>
        <end position="207"/>
    </location>
</feature>
<feature type="transmembrane region" description="Helical" evidence="1">
    <location>
        <begin position="217"/>
        <end position="237"/>
    </location>
</feature>
<feature type="transmembrane region" description="Helical" evidence="1">
    <location>
        <begin position="253"/>
        <end position="273"/>
    </location>
</feature>
<comment type="function">
    <text evidence="1">Catalyzes the dephosphorylation of undecaprenyl diphosphate (UPP). Confers resistance to bacitracin.</text>
</comment>
<comment type="catalytic activity">
    <reaction evidence="1">
        <text>di-trans,octa-cis-undecaprenyl diphosphate + H2O = di-trans,octa-cis-undecaprenyl phosphate + phosphate + H(+)</text>
        <dbReference type="Rhea" id="RHEA:28094"/>
        <dbReference type="ChEBI" id="CHEBI:15377"/>
        <dbReference type="ChEBI" id="CHEBI:15378"/>
        <dbReference type="ChEBI" id="CHEBI:43474"/>
        <dbReference type="ChEBI" id="CHEBI:58405"/>
        <dbReference type="ChEBI" id="CHEBI:60392"/>
        <dbReference type="EC" id="3.6.1.27"/>
    </reaction>
</comment>
<comment type="subcellular location">
    <subcellularLocation>
        <location evidence="1">Cell inner membrane</location>
        <topology evidence="1">Multi-pass membrane protein</topology>
    </subcellularLocation>
</comment>
<comment type="miscellaneous">
    <text>Bacitracin is thought to be involved in the inhibition of peptidoglycan synthesis by sequestering undecaprenyl diphosphate, thereby reducing the pool of lipid carrier available.</text>
</comment>
<comment type="similarity">
    <text evidence="1">Belongs to the UppP family.</text>
</comment>
<sequence>MDWILICKALALGIVEGLTEFLPVSSTGHLIVAGSFLRFHPEQAKTFDVVIQFGAILAVCWEYRRRIIDVVTGLPAQREARRFTMNVVIATVPAVALALLFEKTIKSVLFAPVPVAVALVVGGAAILWVEGRQRERSEPARVQSIDALTPFDALKVGLAQCCALIPGMSRSGSTIIGGMLFGLERRVATEFSFFLAIPVIFGATLYETAKDWRAFNVDSVGLFAIGLVAAFVSAFACVRWLLRYVASHDFTAFAWYRIAFGLFVLLVGYSGWIEWT</sequence>
<protein>
    <recommendedName>
        <fullName evidence="1">Undecaprenyl-diphosphatase 2</fullName>
        <ecNumber evidence="1">3.6.1.27</ecNumber>
    </recommendedName>
    <alternativeName>
        <fullName evidence="1">Bacitracin resistance protein 2</fullName>
    </alternativeName>
    <alternativeName>
        <fullName evidence="1">Undecaprenyl pyrophosphate phosphatase 2</fullName>
    </alternativeName>
</protein>
<name>UPPP2_BURPS</name>
<proteinExistence type="inferred from homology"/>
<accession>Q63RM9</accession>
<gene>
    <name evidence="1" type="primary">uppP2</name>
    <name type="ordered locus">BPSL2643</name>
</gene>